<evidence type="ECO:0000255" key="1">
    <source>
        <dbReference type="HAMAP-Rule" id="MF_00564"/>
    </source>
</evidence>
<keyword id="KW-0548">Nucleotidyltransferase</keyword>
<keyword id="KW-1185">Reference proteome</keyword>
<keyword id="KW-0694">RNA-binding</keyword>
<keyword id="KW-0698">rRNA processing</keyword>
<keyword id="KW-0808">Transferase</keyword>
<keyword id="KW-0819">tRNA processing</keyword>
<keyword id="KW-0820">tRNA-binding</keyword>
<sequence length="236" mass="26024">MRPDGRKNDELRPIKIEKNFIKNADGSVLIELGNTRVICTASIENKVPPFLKDQKKGWITAEYGMLPRSTPVRMLRESTSGRVGGRTHEIQRLIGRTLRAVVDLEKLGERTIWIDCDVIEADGGTRTASITGGYIALVEAVKKAMNAGMITENPIKDSIAAISVGIVLGEPRLDLCYAEDSQAEVDMNIVMTGSGKFIEIQGTAEIYPFSKENLLQLLSLAEKGIREIIRVINNLD</sequence>
<dbReference type="EC" id="2.7.7.56" evidence="1"/>
<dbReference type="EMBL" id="CP001147">
    <property type="protein sequence ID" value="ACI20516.1"/>
    <property type="molecule type" value="Genomic_DNA"/>
</dbReference>
<dbReference type="RefSeq" id="WP_012545252.1">
    <property type="nucleotide sequence ID" value="NC_011296.1"/>
</dbReference>
<dbReference type="RefSeq" id="YP_002249186.1">
    <property type="nucleotide sequence ID" value="NC_011296.1"/>
</dbReference>
<dbReference type="SMR" id="B5YFY8"/>
<dbReference type="FunCoup" id="B5YFY8">
    <property type="interactions" value="363"/>
</dbReference>
<dbReference type="STRING" id="289376.THEYE_A1385"/>
<dbReference type="EnsemblBacteria" id="ACI20516">
    <property type="protein sequence ID" value="ACI20516"/>
    <property type="gene ID" value="THEYE_A1385"/>
</dbReference>
<dbReference type="KEGG" id="tye:THEYE_A1385"/>
<dbReference type="PATRIC" id="fig|289376.4.peg.1347"/>
<dbReference type="eggNOG" id="COG0689">
    <property type="taxonomic scope" value="Bacteria"/>
</dbReference>
<dbReference type="HOGENOM" id="CLU_050858_0_0_0"/>
<dbReference type="InParanoid" id="B5YFY8"/>
<dbReference type="OrthoDB" id="9807456at2"/>
<dbReference type="Proteomes" id="UP000000718">
    <property type="component" value="Chromosome"/>
</dbReference>
<dbReference type="GO" id="GO:0000175">
    <property type="term" value="F:3'-5'-RNA exonuclease activity"/>
    <property type="evidence" value="ECO:0007669"/>
    <property type="project" value="UniProtKB-UniRule"/>
</dbReference>
<dbReference type="GO" id="GO:0003723">
    <property type="term" value="F:RNA binding"/>
    <property type="evidence" value="ECO:0000318"/>
    <property type="project" value="GO_Central"/>
</dbReference>
<dbReference type="GO" id="GO:0000049">
    <property type="term" value="F:tRNA binding"/>
    <property type="evidence" value="ECO:0007669"/>
    <property type="project" value="UniProtKB-UniRule"/>
</dbReference>
<dbReference type="GO" id="GO:0009022">
    <property type="term" value="F:tRNA nucleotidyltransferase activity"/>
    <property type="evidence" value="ECO:0007669"/>
    <property type="project" value="UniProtKB-UniRule"/>
</dbReference>
<dbReference type="GO" id="GO:0016075">
    <property type="term" value="P:rRNA catabolic process"/>
    <property type="evidence" value="ECO:0000318"/>
    <property type="project" value="GO_Central"/>
</dbReference>
<dbReference type="GO" id="GO:0006364">
    <property type="term" value="P:rRNA processing"/>
    <property type="evidence" value="ECO:0007669"/>
    <property type="project" value="UniProtKB-KW"/>
</dbReference>
<dbReference type="GO" id="GO:0008033">
    <property type="term" value="P:tRNA processing"/>
    <property type="evidence" value="ECO:0007669"/>
    <property type="project" value="UniProtKB-UniRule"/>
</dbReference>
<dbReference type="CDD" id="cd11362">
    <property type="entry name" value="RNase_PH_bact"/>
    <property type="match status" value="1"/>
</dbReference>
<dbReference type="FunFam" id="3.30.230.70:FF:000003">
    <property type="entry name" value="Ribonuclease PH"/>
    <property type="match status" value="1"/>
</dbReference>
<dbReference type="Gene3D" id="3.30.230.70">
    <property type="entry name" value="GHMP Kinase, N-terminal domain"/>
    <property type="match status" value="1"/>
</dbReference>
<dbReference type="HAMAP" id="MF_00564">
    <property type="entry name" value="RNase_PH"/>
    <property type="match status" value="1"/>
</dbReference>
<dbReference type="InterPro" id="IPR001247">
    <property type="entry name" value="ExoRNase_PH_dom1"/>
</dbReference>
<dbReference type="InterPro" id="IPR015847">
    <property type="entry name" value="ExoRNase_PH_dom2"/>
</dbReference>
<dbReference type="InterPro" id="IPR036345">
    <property type="entry name" value="ExoRNase_PH_dom2_sf"/>
</dbReference>
<dbReference type="InterPro" id="IPR027408">
    <property type="entry name" value="PNPase/RNase_PH_dom_sf"/>
</dbReference>
<dbReference type="InterPro" id="IPR020568">
    <property type="entry name" value="Ribosomal_Su5_D2-typ_SF"/>
</dbReference>
<dbReference type="InterPro" id="IPR050080">
    <property type="entry name" value="RNase_PH"/>
</dbReference>
<dbReference type="InterPro" id="IPR002381">
    <property type="entry name" value="RNase_PH_bac-type"/>
</dbReference>
<dbReference type="NCBIfam" id="TIGR01966">
    <property type="entry name" value="RNasePH"/>
    <property type="match status" value="1"/>
</dbReference>
<dbReference type="PANTHER" id="PTHR11953">
    <property type="entry name" value="EXOSOME COMPLEX COMPONENT"/>
    <property type="match status" value="1"/>
</dbReference>
<dbReference type="PANTHER" id="PTHR11953:SF0">
    <property type="entry name" value="EXOSOME COMPLEX COMPONENT RRP41"/>
    <property type="match status" value="1"/>
</dbReference>
<dbReference type="Pfam" id="PF01138">
    <property type="entry name" value="RNase_PH"/>
    <property type="match status" value="1"/>
</dbReference>
<dbReference type="Pfam" id="PF03725">
    <property type="entry name" value="RNase_PH_C"/>
    <property type="match status" value="1"/>
</dbReference>
<dbReference type="SUPFAM" id="SSF55666">
    <property type="entry name" value="Ribonuclease PH domain 2-like"/>
    <property type="match status" value="1"/>
</dbReference>
<dbReference type="SUPFAM" id="SSF54211">
    <property type="entry name" value="Ribosomal protein S5 domain 2-like"/>
    <property type="match status" value="1"/>
</dbReference>
<name>RNPH_THEYD</name>
<comment type="function">
    <text evidence="1">Phosphorolytic 3'-5' exoribonuclease that plays an important role in tRNA 3'-end maturation. Removes nucleotide residues following the 3'-CCA terminus of tRNAs; can also add nucleotides to the ends of RNA molecules by using nucleoside diphosphates as substrates, but this may not be physiologically important. Probably plays a role in initiation of 16S rRNA degradation (leading to ribosome degradation) during starvation.</text>
</comment>
<comment type="catalytic activity">
    <reaction evidence="1">
        <text>tRNA(n+1) + phosphate = tRNA(n) + a ribonucleoside 5'-diphosphate</text>
        <dbReference type="Rhea" id="RHEA:10628"/>
        <dbReference type="Rhea" id="RHEA-COMP:17343"/>
        <dbReference type="Rhea" id="RHEA-COMP:17344"/>
        <dbReference type="ChEBI" id="CHEBI:43474"/>
        <dbReference type="ChEBI" id="CHEBI:57930"/>
        <dbReference type="ChEBI" id="CHEBI:173114"/>
        <dbReference type="EC" id="2.7.7.56"/>
    </reaction>
</comment>
<comment type="subunit">
    <text evidence="1">Homohexameric ring arranged as a trimer of dimers.</text>
</comment>
<comment type="similarity">
    <text evidence="1">Belongs to the RNase PH family.</text>
</comment>
<protein>
    <recommendedName>
        <fullName evidence="1">Ribonuclease PH</fullName>
        <shortName evidence="1">RNase PH</shortName>
        <ecNumber evidence="1">2.7.7.56</ecNumber>
    </recommendedName>
    <alternativeName>
        <fullName evidence="1">tRNA nucleotidyltransferase</fullName>
    </alternativeName>
</protein>
<feature type="chain" id="PRO_1000129384" description="Ribonuclease PH">
    <location>
        <begin position="1"/>
        <end position="236"/>
    </location>
</feature>
<feature type="binding site" evidence="1">
    <location>
        <position position="86"/>
    </location>
    <ligand>
        <name>phosphate</name>
        <dbReference type="ChEBI" id="CHEBI:43474"/>
        <note>substrate</note>
    </ligand>
</feature>
<feature type="binding site" evidence="1">
    <location>
        <begin position="124"/>
        <end position="126"/>
    </location>
    <ligand>
        <name>phosphate</name>
        <dbReference type="ChEBI" id="CHEBI:43474"/>
        <note>substrate</note>
    </ligand>
</feature>
<accession>B5YFY8</accession>
<proteinExistence type="inferred from homology"/>
<organism>
    <name type="scientific">Thermodesulfovibrio yellowstonii (strain ATCC 51303 / DSM 11347 / YP87)</name>
    <dbReference type="NCBI Taxonomy" id="289376"/>
    <lineage>
        <taxon>Bacteria</taxon>
        <taxon>Pseudomonadati</taxon>
        <taxon>Nitrospirota</taxon>
        <taxon>Thermodesulfovibrionia</taxon>
        <taxon>Thermodesulfovibrionales</taxon>
        <taxon>Thermodesulfovibrionaceae</taxon>
        <taxon>Thermodesulfovibrio</taxon>
    </lineage>
</organism>
<gene>
    <name evidence="1" type="primary">rph</name>
    <name type="ordered locus">THEYE_A1385</name>
</gene>
<reference key="1">
    <citation type="submission" date="2008-08" db="EMBL/GenBank/DDBJ databases">
        <title>The complete genome sequence of Thermodesulfovibrio yellowstonii strain ATCC 51303 / DSM 11347 / YP87.</title>
        <authorList>
            <person name="Dodson R.J."/>
            <person name="Durkin A.S."/>
            <person name="Wu M."/>
            <person name="Eisen J."/>
            <person name="Sutton G."/>
        </authorList>
    </citation>
    <scope>NUCLEOTIDE SEQUENCE [LARGE SCALE GENOMIC DNA]</scope>
    <source>
        <strain>ATCC 51303 / DSM 11347 / YP87</strain>
    </source>
</reference>